<keyword id="KW-0025">Alternative splicing</keyword>
<keyword id="KW-1003">Cell membrane</keyword>
<keyword id="KW-1015">Disulfide bond</keyword>
<keyword id="KW-0325">Glycoprotein</keyword>
<keyword id="KW-0472">Membrane</keyword>
<keyword id="KW-1185">Reference proteome</keyword>
<keyword id="KW-0732">Signal</keyword>
<keyword id="KW-0812">Transmembrane</keyword>
<keyword id="KW-1133">Transmembrane helix</keyword>
<accession>Q6DDW2</accession>
<accession>A0A1L8GZB8</accession>
<accession>E3WE02</accession>
<dbReference type="EMBL" id="AB566126">
    <property type="protein sequence ID" value="BAJ41187.1"/>
    <property type="molecule type" value="mRNA"/>
</dbReference>
<dbReference type="EMBL" id="CM004470">
    <property type="protein sequence ID" value="OCT89193.1"/>
    <property type="molecule type" value="Genomic_DNA"/>
</dbReference>
<dbReference type="EMBL" id="BC077391">
    <property type="protein sequence ID" value="AAH77391.1"/>
    <property type="molecule type" value="mRNA"/>
</dbReference>
<dbReference type="RefSeq" id="NP_001086747.1">
    <property type="nucleotide sequence ID" value="NM_001093278.1"/>
</dbReference>
<dbReference type="STRING" id="8355.A0A1L8GZB8"/>
<dbReference type="GlyCosmos" id="Q6DDW2">
    <property type="glycosylation" value="10 sites, No reported glycans"/>
</dbReference>
<dbReference type="PaxDb" id="8355-A0A1L8GZB8"/>
<dbReference type="DNASU" id="446582"/>
<dbReference type="GeneID" id="446582"/>
<dbReference type="KEGG" id="xla:446582"/>
<dbReference type="AGR" id="Xenbase:XB-GENE-5954610"/>
<dbReference type="CTD" id="446582"/>
<dbReference type="Xenbase" id="XB-GENE-5954610">
    <property type="gene designation" value="elapor2.L"/>
</dbReference>
<dbReference type="OMA" id="CEYISED"/>
<dbReference type="OrthoDB" id="439917at2759"/>
<dbReference type="Proteomes" id="UP000186698">
    <property type="component" value="Chromosome 3L"/>
</dbReference>
<dbReference type="Proteomes" id="UP000694892">
    <property type="component" value="Chromosome 3L"/>
</dbReference>
<dbReference type="Bgee" id="446582">
    <property type="expression patterns" value="Expressed in stomach and 9 other cell types or tissues"/>
</dbReference>
<dbReference type="GO" id="GO:0016020">
    <property type="term" value="C:membrane"/>
    <property type="evidence" value="ECO:0000318"/>
    <property type="project" value="GO_Central"/>
</dbReference>
<dbReference type="GO" id="GO:0005886">
    <property type="term" value="C:plasma membrane"/>
    <property type="evidence" value="ECO:0000314"/>
    <property type="project" value="UniProtKB"/>
</dbReference>
<dbReference type="GO" id="GO:0070700">
    <property type="term" value="F:BMP receptor binding"/>
    <property type="evidence" value="ECO:0000314"/>
    <property type="project" value="UniProtKB"/>
</dbReference>
<dbReference type="GO" id="GO:0051961">
    <property type="term" value="P:negative regulation of nervous system development"/>
    <property type="evidence" value="ECO:0000315"/>
    <property type="project" value="UniProtKB"/>
</dbReference>
<dbReference type="GO" id="GO:0030513">
    <property type="term" value="P:positive regulation of BMP signaling pathway"/>
    <property type="evidence" value="ECO:0000315"/>
    <property type="project" value="UniProtKB"/>
</dbReference>
<dbReference type="GO" id="GO:0045684">
    <property type="term" value="P:positive regulation of epidermis development"/>
    <property type="evidence" value="ECO:0000315"/>
    <property type="project" value="UniProtKB"/>
</dbReference>
<dbReference type="Gene3D" id="2.10.50.10">
    <property type="entry name" value="Tumor Necrosis Factor Receptor, subunit A, domain 2"/>
    <property type="match status" value="2"/>
</dbReference>
<dbReference type="InterPro" id="IPR056609">
    <property type="entry name" value="Elapor1-like_3rd"/>
</dbReference>
<dbReference type="InterPro" id="IPR039181">
    <property type="entry name" value="Elapor1/2"/>
</dbReference>
<dbReference type="InterPro" id="IPR056606">
    <property type="entry name" value="Elapor1/2_C"/>
</dbReference>
<dbReference type="InterPro" id="IPR056608">
    <property type="entry name" value="Elapor1/2_GBD"/>
</dbReference>
<dbReference type="InterPro" id="IPR056607">
    <property type="entry name" value="Elapor1/2_MRH"/>
</dbReference>
<dbReference type="InterPro" id="IPR056610">
    <property type="entry name" value="Elapor1/2_TNFR-like"/>
</dbReference>
<dbReference type="InterPro" id="IPR009030">
    <property type="entry name" value="Growth_fac_rcpt_cys_sf"/>
</dbReference>
<dbReference type="InterPro" id="IPR009011">
    <property type="entry name" value="Man6P_isomerase_rcpt-bd_dom_sf"/>
</dbReference>
<dbReference type="InterPro" id="IPR044865">
    <property type="entry name" value="MRH_dom"/>
</dbReference>
<dbReference type="InterPro" id="IPR011641">
    <property type="entry name" value="Tyr-kin_ephrin_A/B_rcpt-like"/>
</dbReference>
<dbReference type="PANTHER" id="PTHR22727:SF3">
    <property type="entry name" value="ENDOSOME_LYSOSOME-ASSOCIATED APOPTOSIS AND AUTOPHAGY REGULATOR FAMILY MEMBER 2"/>
    <property type="match status" value="1"/>
</dbReference>
<dbReference type="PANTHER" id="PTHR22727">
    <property type="entry name" value="PROTEIN CBG13728"/>
    <property type="match status" value="1"/>
</dbReference>
<dbReference type="Pfam" id="PF23089">
    <property type="entry name" value="ELAPOR1_C"/>
    <property type="match status" value="1"/>
</dbReference>
<dbReference type="Pfam" id="PF07699">
    <property type="entry name" value="Ephrin_rec_like"/>
    <property type="match status" value="1"/>
</dbReference>
<dbReference type="Pfam" id="PF23031">
    <property type="entry name" value="GBD_ELAPOR1"/>
    <property type="match status" value="1"/>
</dbReference>
<dbReference type="Pfam" id="PF23032">
    <property type="entry name" value="GBD_ELAPOR1-like_3rd"/>
    <property type="match status" value="1"/>
</dbReference>
<dbReference type="Pfam" id="PF23087">
    <property type="entry name" value="MRH_ELAPOR1_9th"/>
    <property type="match status" value="1"/>
</dbReference>
<dbReference type="Pfam" id="PF23091">
    <property type="entry name" value="TNFR_ELAPOR1_6th"/>
    <property type="match status" value="1"/>
</dbReference>
<dbReference type="SMART" id="SM01411">
    <property type="entry name" value="Ephrin_rec_like"/>
    <property type="match status" value="4"/>
</dbReference>
<dbReference type="SUPFAM" id="SSF57184">
    <property type="entry name" value="Growth factor receptor domain"/>
    <property type="match status" value="1"/>
</dbReference>
<dbReference type="SUPFAM" id="SSF50911">
    <property type="entry name" value="Mannose 6-phosphate receptor domain"/>
    <property type="match status" value="1"/>
</dbReference>
<dbReference type="PROSITE" id="PS51914">
    <property type="entry name" value="MRH"/>
    <property type="match status" value="1"/>
</dbReference>
<reference key="1">
    <citation type="journal article" date="2011" name="J. Biol. Chem.">
        <title>A transmembrane protein EIG121L is required for epidermal differentiation during early embryonic development.</title>
        <authorList>
            <person name="Araki T."/>
            <person name="Kusakabe M."/>
            <person name="Nishida E."/>
        </authorList>
    </citation>
    <scope>NUCLEOTIDE SEQUENCE [MRNA] (ISOFORM 1)</scope>
    <scope>FUNCTION</scope>
    <scope>SUBCELLULAR LOCATION</scope>
    <scope>DEVELOPMENTAL STAGE</scope>
    <scope>DISRUPTION PHENOTYPE</scope>
</reference>
<reference key="2">
    <citation type="journal article" date="2016" name="Nature">
        <title>Genome evolution in the allotetraploid frog Xenopus laevis.</title>
        <authorList>
            <person name="Session A.M."/>
            <person name="Uno Y."/>
            <person name="Kwon T."/>
            <person name="Chapman J.A."/>
            <person name="Toyoda A."/>
            <person name="Takahashi S."/>
            <person name="Fukui A."/>
            <person name="Hikosaka A."/>
            <person name="Suzuki A."/>
            <person name="Kondo M."/>
            <person name="van Heeringen S.J."/>
            <person name="Quigley I."/>
            <person name="Heinz S."/>
            <person name="Ogino H."/>
            <person name="Ochi H."/>
            <person name="Hellsten U."/>
            <person name="Lyons J.B."/>
            <person name="Simakov O."/>
            <person name="Putnam N."/>
            <person name="Stites J."/>
            <person name="Kuroki Y."/>
            <person name="Tanaka T."/>
            <person name="Michiue T."/>
            <person name="Watanabe M."/>
            <person name="Bogdanovic O."/>
            <person name="Lister R."/>
            <person name="Georgiou G."/>
            <person name="Paranjpe S.S."/>
            <person name="van Kruijsbergen I."/>
            <person name="Shu S."/>
            <person name="Carlson J."/>
            <person name="Kinoshita T."/>
            <person name="Ohta Y."/>
            <person name="Mawaribuchi S."/>
            <person name="Jenkins J."/>
            <person name="Grimwood J."/>
            <person name="Schmutz J."/>
            <person name="Mitros T."/>
            <person name="Mozaffari S.V."/>
            <person name="Suzuki Y."/>
            <person name="Haramoto Y."/>
            <person name="Yamamoto T.S."/>
            <person name="Takagi C."/>
            <person name="Heald R."/>
            <person name="Miller K."/>
            <person name="Haudenschild C."/>
            <person name="Kitzman J."/>
            <person name="Nakayama T."/>
            <person name="Izutsu Y."/>
            <person name="Robert J."/>
            <person name="Fortriede J."/>
            <person name="Burns K."/>
            <person name="Lotay V."/>
            <person name="Karimi K."/>
            <person name="Yasuoka Y."/>
            <person name="Dichmann D.S."/>
            <person name="Flajnik M.F."/>
            <person name="Houston D.W."/>
            <person name="Shendure J."/>
            <person name="DuPasquier L."/>
            <person name="Vize P.D."/>
            <person name="Zorn A.M."/>
            <person name="Ito M."/>
            <person name="Marcotte E.M."/>
            <person name="Wallingford J.B."/>
            <person name="Ito Y."/>
            <person name="Asashima M."/>
            <person name="Ueno N."/>
            <person name="Matsuda Y."/>
            <person name="Veenstra G.J."/>
            <person name="Fujiyama A."/>
            <person name="Harland R.M."/>
            <person name="Taira M."/>
            <person name="Rokhsar D.S."/>
        </authorList>
    </citation>
    <scope>NUCLEOTIDE SEQUENCE [LARGE SCALE GENOMIC DNA]</scope>
    <source>
        <strain>J</strain>
    </source>
</reference>
<reference evidence="9" key="3">
    <citation type="submission" date="2004-07" db="EMBL/GenBank/DDBJ databases">
        <authorList>
            <consortium name="NIH - Xenopus Gene Collection (XGC) project"/>
        </authorList>
    </citation>
    <scope>NUCLEOTIDE SEQUENCE [LARGE SCALE MRNA] (ISOFORM 2)</scope>
    <source>
        <tissue evidence="9">Gastrula</tissue>
    </source>
</reference>
<reference evidence="8" key="4">
    <citation type="journal article" date="2007" name="Gene Expr. Patterns">
        <title>Expression of estrogen induced gene 121-like (EIG121L) during early Xenopus development.</title>
        <authorList>
            <person name="Araki T."/>
            <person name="Kusakabe M."/>
            <person name="Nishida E."/>
        </authorList>
    </citation>
    <scope>TISSUE SPECIFICITY</scope>
    <scope>DEVELOPMENTAL STAGE</scope>
    <scope>INDUCTION</scope>
</reference>
<gene>
    <name type="primary">elapor2</name>
    <name evidence="7" type="synonym">eig121l</name>
    <name evidence="1" type="synonym">kiaa1324l</name>
</gene>
<proteinExistence type="evidence at protein level"/>
<comment type="function">
    <text evidence="6">Functions as a regulator of the BMP signaling pathway and is involved in epidermal differentiation.</text>
</comment>
<comment type="subcellular location">
    <subcellularLocation>
        <location evidence="6">Cell membrane</location>
        <topology evidence="2">Single-pass type I membrane protein</topology>
    </subcellularLocation>
</comment>
<comment type="alternative products">
    <event type="alternative splicing"/>
    <isoform>
        <id>Q6DDW2-1</id>
        <name>1</name>
        <sequence type="displayed"/>
    </isoform>
    <isoform>
        <id>Q6DDW2-2</id>
        <name>2</name>
        <sequence type="described" ref="VSP_060576"/>
    </isoform>
</comment>
<comment type="tissue specificity">
    <text evidence="5">Expressed in the animal half of the embryo during gastrulation, becoming restricted to the ventral ectoderm at stage 12.5. At the neurula stage, expressed in the anterior ectoderm surrounding the neural plate, and weakly in the epidermis. Expression is especially high in the presumptive hatching gland and cement gland regions. Surprisingly, by the tailbud stage (stage 22), expression is limited to the hatching gland and is not seen in the cement gland. Conversely, in tadpoles expressed broadly in the head, heart and fin. Expression in the head is seen in the primary mouth and in the brain, eyes, otic vesicles and olfactory pits.</text>
</comment>
<comment type="developmental stage">
    <text evidence="5 6">First expressed at stage 9, after the mid-blastula transition (MBT). Expression is highest at stage 10.5 and remains constant until the tadpole stage (PubMed:17475571). First detected at stage 10.5, expression increases gradually until the tadpole stage (at protein level) (PubMed:21177533). Highly expressed in the epidermal ectoderm at the neurula stage (PubMed:21177533).</text>
</comment>
<comment type="induction">
    <text evidence="5">Expression is down-regulated by ras.</text>
</comment>
<comment type="disruption phenotype">
    <text evidence="6">Morpholino knockdown induces severe developmental defects including dorsal open phenotype and the reduction of head and tail structures at the tailbud stage.</text>
</comment>
<comment type="similarity">
    <text evidence="2">Belongs to the ELAPOR family.</text>
</comment>
<protein>
    <recommendedName>
        <fullName evidence="8">Endosome/lysosome-associated apoptosis and autophagy regulator family member 2</fullName>
    </recommendedName>
    <alternativeName>
        <fullName evidence="7">Estrogen-induced gene 121-like protein</fullName>
        <shortName evidence="7">xEIG121L</shortName>
    </alternativeName>
</protein>
<evidence type="ECO:0000250" key="1">
    <source>
        <dbReference type="UniProtKB" id="A8MWY0"/>
    </source>
</evidence>
<evidence type="ECO:0000255" key="2"/>
<evidence type="ECO:0000255" key="3">
    <source>
        <dbReference type="PROSITE-ProRule" id="PRU00498"/>
    </source>
</evidence>
<evidence type="ECO:0000255" key="4">
    <source>
        <dbReference type="PROSITE-ProRule" id="PRU01262"/>
    </source>
</evidence>
<evidence type="ECO:0000269" key="5">
    <source>
    </source>
</evidence>
<evidence type="ECO:0000269" key="6">
    <source>
    </source>
</evidence>
<evidence type="ECO:0000303" key="7">
    <source>
    </source>
</evidence>
<evidence type="ECO:0000305" key="8"/>
<evidence type="ECO:0000312" key="9">
    <source>
        <dbReference type="EMBL" id="AAH77391.1"/>
    </source>
</evidence>
<name>ELAP2_XENLA</name>
<organism>
    <name type="scientific">Xenopus laevis</name>
    <name type="common">African clawed frog</name>
    <dbReference type="NCBI Taxonomy" id="8355"/>
    <lineage>
        <taxon>Eukaryota</taxon>
        <taxon>Metazoa</taxon>
        <taxon>Chordata</taxon>
        <taxon>Craniata</taxon>
        <taxon>Vertebrata</taxon>
        <taxon>Euteleostomi</taxon>
        <taxon>Amphibia</taxon>
        <taxon>Batrachia</taxon>
        <taxon>Anura</taxon>
        <taxon>Pipoidea</taxon>
        <taxon>Pipidae</taxon>
        <taxon>Xenopodinae</taxon>
        <taxon>Xenopus</taxon>
        <taxon>Xenopus</taxon>
    </lineage>
</organism>
<feature type="signal peptide" evidence="2">
    <location>
        <begin position="1"/>
        <end position="21"/>
    </location>
</feature>
<feature type="chain" id="PRO_0000353196" description="Endosome/lysosome-associated apoptosis and autophagy regulator family member 2" evidence="2">
    <location>
        <begin position="22"/>
        <end position="995"/>
    </location>
</feature>
<feature type="topological domain" description="Extracellular" evidence="8">
    <location>
        <begin position="22"/>
        <end position="895"/>
    </location>
</feature>
<feature type="transmembrane region" description="Helical" evidence="2">
    <location>
        <begin position="896"/>
        <end position="916"/>
    </location>
</feature>
<feature type="topological domain" description="Cytoplasmic" evidence="8">
    <location>
        <begin position="917"/>
        <end position="995"/>
    </location>
</feature>
<feature type="domain" description="MRH" evidence="4">
    <location>
        <begin position="639"/>
        <end position="843"/>
    </location>
</feature>
<feature type="glycosylation site" description="N-linked (GlcNAc...) asparagine" evidence="3">
    <location>
        <position position="24"/>
    </location>
</feature>
<feature type="glycosylation site" description="N-linked (GlcNAc...) asparagine" evidence="3">
    <location>
        <position position="136"/>
    </location>
</feature>
<feature type="glycosylation site" description="N-linked (GlcNAc...) asparagine" evidence="3">
    <location>
        <position position="245"/>
    </location>
</feature>
<feature type="glycosylation site" description="N-linked (GlcNAc...) asparagine" evidence="3">
    <location>
        <position position="372"/>
    </location>
</feature>
<feature type="glycosylation site" description="N-linked (GlcNAc...) asparagine" evidence="3">
    <location>
        <position position="527"/>
    </location>
</feature>
<feature type="glycosylation site" description="N-linked (GlcNAc...) asparagine" evidence="3">
    <location>
        <position position="649"/>
    </location>
</feature>
<feature type="glycosylation site" description="N-linked (GlcNAc...) asparagine" evidence="3">
    <location>
        <position position="683"/>
    </location>
</feature>
<feature type="glycosylation site" description="N-linked (GlcNAc...) asparagine" evidence="3">
    <location>
        <position position="700"/>
    </location>
</feature>
<feature type="glycosylation site" description="N-linked (GlcNAc...) asparagine" evidence="3">
    <location>
        <position position="758"/>
    </location>
</feature>
<feature type="glycosylation site" description="N-linked (GlcNAc...) asparagine" evidence="3">
    <location>
        <position position="883"/>
    </location>
</feature>
<feature type="disulfide bond" evidence="4">
    <location>
        <begin position="641"/>
        <end position="687"/>
    </location>
</feature>
<feature type="disulfide bond" evidence="4">
    <location>
        <begin position="697"/>
        <end position="725"/>
    </location>
</feature>
<feature type="disulfide bond" evidence="4">
    <location>
        <begin position="793"/>
        <end position="829"/>
    </location>
</feature>
<feature type="disulfide bond" evidence="4">
    <location>
        <begin position="805"/>
        <end position="841"/>
    </location>
</feature>
<feature type="splice variant" id="VSP_060576" description="In isoform 2.">
    <location>
        <begin position="820"/>
        <end position="995"/>
    </location>
</feature>
<feature type="sequence conflict" description="In Ref. 3; AAH77391 and 1; BAJ41187." evidence="8" ref="3 1">
    <original>Y</original>
    <variation>F</variation>
    <location>
        <position position="35"/>
    </location>
</feature>
<feature type="sequence conflict" description="In Ref. 3; AAH77391 and 1; BAJ41187." evidence="8" ref="3 1">
    <original>V</original>
    <variation>E</variation>
    <location>
        <position position="516"/>
    </location>
</feature>
<feature type="sequence conflict" description="In Ref. 3; AAH77391 and 1; BAJ41187." evidence="8" ref="3 1">
    <original>N</original>
    <variation>K</variation>
    <location>
        <position position="758"/>
    </location>
</feature>
<feature type="sequence conflict" description="In Ref. 1; BAJ41187." evidence="8" ref="1">
    <original>N</original>
    <variation>K</variation>
    <location>
        <position position="883"/>
    </location>
</feature>
<sequence length="995" mass="109731">MGVFCWSGCLVISLQLLLGAALDNLSTCKEEDYHYEYTECDSTGSRWRVAVPNPGKACAGLPDPVKGKECTFSCAAGEFLEISSQLCSKCEPGTYSLGTGIKFDEWDKMPQGFSNVATYMENTAEFSDNKPDSCVNSSWIPRGNYIESNSDDCTVSLIYAVHLKKAGSVSFEYQYLDNNIFFEFFIQNDQCQEMSSSSDKWVKLSDNSDWMNHMVSLKSGTNILYWRTTGILMGTKVAKPVLIKNITIEGVAYTSECFPCKPGTYSDEAGSSSCKICPRNTYSDRQAKECIKCFEEKEYSEEGASKCEERPPCTKKDLFQIHTPCDSERKTQVIYKWIEPKICREELPASIKLPASGNKEDCPPCNPGYFSNGTSACSPCPVGTYSNGLSECKTCPAGTEPVLGFEYKWWNILPGNMKTSCFNVGNSKCDGMNGWEVAGDHIQSGIGGTDNDYLILNLHISGFKPPTSVTGATGAELGRVTFVFENICVSDCVLYFMVDINRKSTSLVESFAGRKVYQSYTHVIHKNATYMFTWAFQRTNLAQDSRRFVNDIAKIYSIMVTNAIDGVSSSCRACALGPQQLGSSCVPCPAGHYIDKESNMCKECPPNTYLTPHQVYGKEACVPCGPGSKSNKDHSACYSECLVTYTNENQTLSYNFNNLGKVATLLNGPSFTSKGTKYYHLFNMSLCGHGGEKMAVCTDNITDVTGKDIEADSDDYSNVVKTFVCQSTIIPSDSKGFRTALSSQSVNLADSFLGVTNNSSLRGITISPDIFPSHLKIPDVNFFFKSLATTSSCEQGRATVISMRCNPAKLGQGDISVPRNCPAATCDGCNFYFLWETAEACPLCMESDYQKIEGACKHGQQETHYVWNEMKLCTNGVSLPEKNVSACESIDFWLKVGAGVGAFTAVLLIALTCYFWKKNQKLEYKYSKLVITANSKECELPAPDSCAIMEGEDNEDDVIYSNKQSLLEKLKSLATKEKEHNFESVQLKSSRAQNI</sequence>